<name>TICRR_XENLA</name>
<protein>
    <recommendedName>
        <fullName>Treslin</fullName>
    </recommendedName>
    <alternativeName>
        <fullName>TopBP1-interacting checkpoint and replication regulator</fullName>
    </alternativeName>
    <alternativeName>
        <fullName>TopBP1-interacting, replication-stimulating protein</fullName>
    </alternativeName>
</protein>
<sequence length="1985" mass="221396">MAPSHNVVLLVDTAESSDKSRLRRVSLRLLNFLACRAGLGQVRWSYRFLNSSGGRCRPPRRSDLRELGPRGWEEFEDELEACWERARNCRPSSTQSSRAQLLQTALMETLADFQWDRPDITSPTKPTLLRSRRGRIVAADEPLKDDSPDNFINPHSRNSIFLLSSCPHSGTELGQFAATSGDFSTQKVMDKLLPKSLQKIVSSKRVRVYWLDTSDWTQFGSSSDHSGYWTMVELMHQVEGRILPSESILGSSCQKAKTLPSFSVPPINIPFESVLNYLIFSEPDYQLWFPRRDGILFLTGKDGTKQLDCAVSLEPVSMIQKLSTSLMTIELKGTMQNCNLPLAGLRVETWLLHNSDCVQLQKLTKELMLKELHMIATVTLEDDVLPRTGILSPLSETAAVLNVICSERTLGLDNLHVQGSVHETDKETFSDLPDIVMSVLNHVYSSEDNTLAPDFPVPEWIKQELSQSSRWTSSVTARWYPLSGVSGASCNLMESFRLINAASSNCDEHLKFDQELTNYLSEFYQKKSVDDAGLGVHRENQKKSGLPRTPVRQKMKTLPRALQMLNAARLNVKAQKADSTLPVPNEKNSQMKRRSSGKQDNKPKQLKPTEFQSEDGLISYIKENYEEAVSLVDHSTMTWARDTLTTIKSYLKSIGSEQIETEAIDKVKLLFKTSKVIRQNYRNNQDKEVKLKECQLQVFLRLEMFVQCPVIQMDSDELELIIEEITDILRIVSLTEDPLFLTKFLEVDVLTQYIASVPKILADIYFSLGTQIPEVLVLVLPSDGDDSIMHEEKSVKSQPSTSRVPSVAPIGAETDQLEDLRTRSAKKRRSTALARHRSVAESSQSFRQIEVPKRQPNKENVQSNAVVVLEKLKLPLPAQPQKDAEAKVRRNLFIQETRSPSKRCSKMPRSQSVSAVESLKRKRSKSHDGSKDHHKLLTKKVSETPVHKQTANRLLLRQIKGRPSESNSNISIVEESPEKEIRDIDLRRSPRIKQLSLTRRNSSSFYASQPKSRNLERVNSATQLQQSRERPGSCLISEVKTPKRLLFGEVLGMISPPTTKRSRRILDMVNPVYKTPGKTPRKTPSKNIPNFEDQSGNMLVKSPCTPYTPRTPSRTPKRLKTPSKGSTERKKAAKNLGKLFSPSKPEEKSPLKLWGRRSERLAQMTPGKDGSPYKQSVCQTLMEVKTPQKLQRLESKDFRTPSRTPTRSNNTTPAKQSMQISNTPRKSDLKHPQEHESRGPSGYILWTPQKRILASVPHTPILQTPQKPISASVPRTPVCRTPQKAILSSVPSTPVCQTPNKAILTSVSRTPVYQTPQKAILASVMSTPVYQTPQKPVLASVPTTPILKTPQRSALASVSHTPSPKKYIMKELTVAITRMRECTPEKVLGSNLSSSATPSSALKSFCSEKTTSVCQTPKKSSIALLKPCDSLEFSGAPERLMDSLCSNKDSTKAETACTVPSQISTQMQNVINAGECTDSLSQTSVSSPSIPFTDKSLSPDLKDALSDVTSSKAEGVTIVSEKLDSSSMDSQEATDSFINSSQTEESIDISEARVVSTEASELKMKVLITRKPSGSGVSYLPTTPKCLGNVCSTSTYGLRCTPDRRQREAAARLGTPEIPAKFSTPKSHCKMIPQSIYEVELEMQESGLPKLRFKRTDSNSTIDMDVNKTPKISRKRKGDESPFNEKWCSKHAVRTEPACVSPSCVRTSHYTPGKSGIQTFICQSYTPNRCLSAAASPSQSDAGVPWTPSPKEKLSTDVINSWPRKKKASALCTNLLKCDKIPEYAEEDGGDFELEGVSKLLEKSPVIEQQSKVDGGTFGLRSRKRVFSLVSPTKETENPVKRVCTFNRHEDSSTATHRHQTKEEMEIFSSDQSRSSYLSSSQQSICDDVFNMSDFTPPSKVPKNPLSACGLLTLTQSPLLYKGKTPSSKRKEKIQDVFSDGDSDHGTPTLKRPTNPAAVSDDSPFRKVNPLRSISKTYSRKKLIT</sequence>
<dbReference type="EMBL" id="GQ227788">
    <property type="protein sequence ID" value="ADC30134.1"/>
    <property type="molecule type" value="mRNA"/>
</dbReference>
<dbReference type="EMBL" id="BC073061">
    <property type="protein sequence ID" value="AAH73061.1"/>
    <property type="status" value="ALT_SEQ"/>
    <property type="molecule type" value="mRNA"/>
</dbReference>
<dbReference type="RefSeq" id="NP_001165777.1">
    <property type="nucleotide sequence ID" value="NM_001172306.1"/>
</dbReference>
<dbReference type="BioGRID" id="101781">
    <property type="interactions" value="1"/>
</dbReference>
<dbReference type="IntAct" id="D3IUT5">
    <property type="interactions" value="1"/>
</dbReference>
<dbReference type="GeneID" id="443616"/>
<dbReference type="KEGG" id="xla:443616"/>
<dbReference type="AGR" id="Xenbase:XB-GENE-963896"/>
<dbReference type="CTD" id="443616"/>
<dbReference type="Xenbase" id="XB-GENE-963896">
    <property type="gene designation" value="ticrr.L"/>
</dbReference>
<dbReference type="OrthoDB" id="5812172at2759"/>
<dbReference type="Proteomes" id="UP000186698">
    <property type="component" value="Chromosome 3L"/>
</dbReference>
<dbReference type="Bgee" id="443616">
    <property type="expression patterns" value="Expressed in egg cell and 20 other cell types or tissues"/>
</dbReference>
<dbReference type="GO" id="GO:0005634">
    <property type="term" value="C:nucleus"/>
    <property type="evidence" value="ECO:0000318"/>
    <property type="project" value="GO_Central"/>
</dbReference>
<dbReference type="GO" id="GO:0003682">
    <property type="term" value="F:chromatin binding"/>
    <property type="evidence" value="ECO:0000318"/>
    <property type="project" value="GO_Central"/>
</dbReference>
<dbReference type="GO" id="GO:0006281">
    <property type="term" value="P:DNA repair"/>
    <property type="evidence" value="ECO:0007669"/>
    <property type="project" value="UniProtKB-KW"/>
</dbReference>
<dbReference type="GO" id="GO:0006260">
    <property type="term" value="P:DNA replication"/>
    <property type="evidence" value="ECO:0000318"/>
    <property type="project" value="GO_Central"/>
</dbReference>
<dbReference type="GO" id="GO:0033314">
    <property type="term" value="P:mitotic DNA replication checkpoint signaling"/>
    <property type="evidence" value="ECO:0000318"/>
    <property type="project" value="GO_Central"/>
</dbReference>
<dbReference type="GO" id="GO:0007095">
    <property type="term" value="P:mitotic G2 DNA damage checkpoint signaling"/>
    <property type="evidence" value="ECO:0000318"/>
    <property type="project" value="GO_Central"/>
</dbReference>
<dbReference type="GO" id="GO:0030174">
    <property type="term" value="P:regulation of DNA-templated DNA replication initiation"/>
    <property type="evidence" value="ECO:0000318"/>
    <property type="project" value="GO_Central"/>
</dbReference>
<dbReference type="GO" id="GO:0010212">
    <property type="term" value="P:response to ionizing radiation"/>
    <property type="evidence" value="ECO:0007669"/>
    <property type="project" value="InterPro"/>
</dbReference>
<dbReference type="InterPro" id="IPR026153">
    <property type="entry name" value="Treslin"/>
</dbReference>
<dbReference type="InterPro" id="IPR032746">
    <property type="entry name" value="Treslin_M"/>
</dbReference>
<dbReference type="InterPro" id="IPR053919">
    <property type="entry name" value="Treslin_N"/>
</dbReference>
<dbReference type="InterPro" id="IPR053920">
    <property type="entry name" value="Treslin_STD"/>
</dbReference>
<dbReference type="PANTHER" id="PTHR21556">
    <property type="entry name" value="TRESLIN"/>
    <property type="match status" value="1"/>
</dbReference>
<dbReference type="PANTHER" id="PTHR21556:SF2">
    <property type="entry name" value="TRESLIN"/>
    <property type="match status" value="1"/>
</dbReference>
<dbReference type="Pfam" id="PF15292">
    <property type="entry name" value="Treslin_M"/>
    <property type="match status" value="1"/>
</dbReference>
<dbReference type="Pfam" id="PF21854">
    <property type="entry name" value="Treslin_N"/>
    <property type="match status" value="1"/>
</dbReference>
<dbReference type="Pfam" id="PF21855">
    <property type="entry name" value="Treslin_STD"/>
    <property type="match status" value="1"/>
</dbReference>
<comment type="function">
    <text evidence="3">Regulator of DNA replication and S/M and G2/M checkpoints. Regulates the triggering of DNA replication initiation via its interaction with topbp1 by participating in cdk2-mediated loading of cdc45l onto replication origins. Required for the transition from pre-replication complex (pre-RC) to pre-initiation complex (pre-IC). Required to prevent mitotic entry after treatment with ionizing radiation.</text>
</comment>
<comment type="subunit">
    <text evidence="1 3">Interacts with topbp1 (via BRCT domains); interaction is cdk2-dependent (PubMed:20116089). Component of the replisome complex (By similarity).</text>
</comment>
<comment type="interaction">
    <interactant intactId="EBI-2607396">
        <id>D3IUT5</id>
    </interactant>
    <interactant intactId="EBI-2607374">
        <id>Q800K6</id>
        <label>topbp1-A</label>
    </interactant>
    <organismsDiffer>false</organismsDiffer>
    <experiments>4</experiments>
</comment>
<comment type="subcellular location">
    <subcellularLocation>
        <location evidence="3">Nucleus</location>
    </subcellularLocation>
    <text>Associates with chromatin.</text>
</comment>
<comment type="PTM">
    <text evidence="3">Phosphorylated during interphase. Cdk2 promotes both phosphorylation and formation of a ticrr-topbp1 complex.</text>
</comment>
<comment type="similarity">
    <text evidence="4">Belongs to the treslin family.</text>
</comment>
<comment type="sequence caution" evidence="4">
    <conflict type="erroneous initiation">
        <sequence resource="EMBL-CDS" id="AAH73061"/>
    </conflict>
    <text>Extended N-terminus.</text>
</comment>
<comment type="sequence caution" evidence="4">
    <conflict type="miscellaneous discrepancy">
        <sequence resource="EMBL-CDS" id="AAH73061"/>
    </conflict>
    <text>Contaminating sequence. Potential poly-A sequence.</text>
</comment>
<evidence type="ECO:0000250" key="1">
    <source>
        <dbReference type="UniProtKB" id="Q7Z2Z1"/>
    </source>
</evidence>
<evidence type="ECO:0000256" key="2">
    <source>
        <dbReference type="SAM" id="MobiDB-lite"/>
    </source>
</evidence>
<evidence type="ECO:0000269" key="3">
    <source>
    </source>
</evidence>
<evidence type="ECO:0000305" key="4"/>
<reference key="1">
    <citation type="journal article" date="2010" name="Cell">
        <title>Treslin collaborates with TopBP1 in triggering the initiation of DNA replication.</title>
        <authorList>
            <person name="Kumagai A."/>
            <person name="Shevchenko A."/>
            <person name="Shevchenko A."/>
            <person name="Dunphy W.G."/>
        </authorList>
    </citation>
    <scope>NUCLEOTIDE SEQUENCE [MRNA]</scope>
    <scope>FUNCTION</scope>
    <scope>SUBCELLULAR LOCATION</scope>
    <scope>INTERACTION WITH TOPBP1</scope>
    <scope>PHOSPHORYLATION</scope>
</reference>
<reference key="2">
    <citation type="submission" date="2004-06" db="EMBL/GenBank/DDBJ databases">
        <authorList>
            <consortium name="NIH - Xenopus Gene Collection (XGC) project"/>
        </authorList>
    </citation>
    <scope>NUCLEOTIDE SEQUENCE [LARGE SCALE MRNA] OF 1-1367</scope>
    <source>
        <tissue>Ovary</tissue>
    </source>
</reference>
<organism>
    <name type="scientific">Xenopus laevis</name>
    <name type="common">African clawed frog</name>
    <dbReference type="NCBI Taxonomy" id="8355"/>
    <lineage>
        <taxon>Eukaryota</taxon>
        <taxon>Metazoa</taxon>
        <taxon>Chordata</taxon>
        <taxon>Craniata</taxon>
        <taxon>Vertebrata</taxon>
        <taxon>Euteleostomi</taxon>
        <taxon>Amphibia</taxon>
        <taxon>Batrachia</taxon>
        <taxon>Anura</taxon>
        <taxon>Pipoidea</taxon>
        <taxon>Pipidae</taxon>
        <taxon>Xenopodinae</taxon>
        <taxon>Xenopus</taxon>
        <taxon>Xenopus</taxon>
    </lineage>
</organism>
<accession>D3IUT5</accession>
<accession>Q6GPQ1</accession>
<feature type="chain" id="PRO_0000394240" description="Treslin">
    <location>
        <begin position="1"/>
        <end position="1985"/>
    </location>
</feature>
<feature type="region of interest" description="Disordered" evidence="2">
    <location>
        <begin position="574"/>
        <end position="609"/>
    </location>
</feature>
<feature type="region of interest" description="Disordered" evidence="2">
    <location>
        <begin position="791"/>
        <end position="858"/>
    </location>
</feature>
<feature type="region of interest" description="Disordered" evidence="2">
    <location>
        <begin position="894"/>
        <end position="974"/>
    </location>
</feature>
<feature type="region of interest" description="Disordered" evidence="2">
    <location>
        <begin position="999"/>
        <end position="1033"/>
    </location>
</feature>
<feature type="region of interest" description="Disordered" evidence="2">
    <location>
        <begin position="1072"/>
        <end position="1156"/>
    </location>
</feature>
<feature type="region of interest" description="Disordered" evidence="2">
    <location>
        <begin position="1184"/>
        <end position="1243"/>
    </location>
</feature>
<feature type="region of interest" description="Disordered" evidence="2">
    <location>
        <begin position="1849"/>
        <end position="1875"/>
    </location>
</feature>
<feature type="region of interest" description="Disordered" evidence="2">
    <location>
        <begin position="1938"/>
        <end position="1966"/>
    </location>
</feature>
<feature type="compositionally biased region" description="Basic residues" evidence="2">
    <location>
        <begin position="823"/>
        <end position="837"/>
    </location>
</feature>
<feature type="compositionally biased region" description="Low complexity" evidence="2">
    <location>
        <begin position="964"/>
        <end position="974"/>
    </location>
</feature>
<feature type="compositionally biased region" description="Polar residues" evidence="2">
    <location>
        <begin position="999"/>
        <end position="1026"/>
    </location>
</feature>
<feature type="compositionally biased region" description="Polar residues" evidence="2">
    <location>
        <begin position="1085"/>
        <end position="1097"/>
    </location>
</feature>
<feature type="compositionally biased region" description="Low complexity" evidence="2">
    <location>
        <begin position="1105"/>
        <end position="1114"/>
    </location>
</feature>
<feature type="compositionally biased region" description="Basic and acidic residues" evidence="2">
    <location>
        <begin position="1144"/>
        <end position="1156"/>
    </location>
</feature>
<feature type="compositionally biased region" description="Basic and acidic residues" evidence="2">
    <location>
        <begin position="1191"/>
        <end position="1200"/>
    </location>
</feature>
<feature type="compositionally biased region" description="Polar residues" evidence="2">
    <location>
        <begin position="1201"/>
        <end position="1224"/>
    </location>
</feature>
<feature type="compositionally biased region" description="Basic and acidic residues" evidence="2">
    <location>
        <begin position="1225"/>
        <end position="1238"/>
    </location>
</feature>
<feature type="sequence conflict" description="In Ref. 2; AAH73061." evidence="4" ref="2">
    <original>W</original>
    <variation>R</variation>
    <location>
        <position position="1246"/>
    </location>
</feature>
<feature type="sequence conflict" description="In Ref. 2; AAH73061." evidence="4" ref="2">
    <original>S</original>
    <variation>L</variation>
    <location>
        <position position="1270"/>
    </location>
</feature>
<feature type="sequence conflict" description="In Ref. 2; AAH73061." evidence="4" ref="2">
    <original>C</original>
    <variation>Y</variation>
    <location>
        <position position="1279"/>
    </location>
</feature>
<feature type="sequence conflict" description="In Ref. 2; AAH73061." evidence="4" ref="2">
    <original>T</original>
    <variation>A</variation>
    <location>
        <position position="1305"/>
    </location>
</feature>
<feature type="sequence conflict" description="In Ref. 2; AAH73061." evidence="4" ref="2">
    <original>Q</original>
    <variation>R</variation>
    <location>
        <position position="1314"/>
    </location>
</feature>
<feature type="sequence conflict" description="In Ref. 2; AAH73061." evidence="4" ref="2">
    <original>Y</original>
    <variation>C</variation>
    <location>
        <position position="1330"/>
    </location>
</feature>
<feature type="sequence conflict" description="In Ref. 2; AAH73061." evidence="4" ref="2">
    <original>T</original>
    <variation>S</variation>
    <location>
        <position position="1343"/>
    </location>
</feature>
<proteinExistence type="evidence at protein level"/>
<keyword id="KW-0131">Cell cycle</keyword>
<keyword id="KW-0227">DNA damage</keyword>
<keyword id="KW-0234">DNA repair</keyword>
<keyword id="KW-0539">Nucleus</keyword>
<keyword id="KW-0597">Phosphoprotein</keyword>
<keyword id="KW-1185">Reference proteome</keyword>
<gene>
    <name type="primary">ticrr</name>
</gene>